<sequence>MKRIAFVFSTTPHGSASGREGLDALLATSALTEETGVFFIGDGVFQILSGQTPDVVLARDYIATFKLLGLYDIEQCWLCAASLRERGLETGASFIVDATPLEPEALRGELDNYDVILRF</sequence>
<organism>
    <name type="scientific">Citrobacter koseri (strain ATCC BAA-895 / CDC 4225-83 / SGSC4696)</name>
    <dbReference type="NCBI Taxonomy" id="290338"/>
    <lineage>
        <taxon>Bacteria</taxon>
        <taxon>Pseudomonadati</taxon>
        <taxon>Pseudomonadota</taxon>
        <taxon>Gammaproteobacteria</taxon>
        <taxon>Enterobacterales</taxon>
        <taxon>Enterobacteriaceae</taxon>
        <taxon>Citrobacter</taxon>
    </lineage>
</organism>
<keyword id="KW-0963">Cytoplasm</keyword>
<keyword id="KW-1185">Reference proteome</keyword>
<keyword id="KW-0819">tRNA processing</keyword>
<evidence type="ECO:0000255" key="1">
    <source>
        <dbReference type="HAMAP-Rule" id="MF_00389"/>
    </source>
</evidence>
<gene>
    <name evidence="1" type="primary">tusC</name>
    <name type="ordered locus">CKO_04750</name>
</gene>
<accession>A8AQN2</accession>
<name>TUSC_CITK8</name>
<protein>
    <recommendedName>
        <fullName evidence="1">Protein TusC</fullName>
    </recommendedName>
    <alternativeName>
        <fullName evidence="1">tRNA 2-thiouridine synthesizing protein C</fullName>
    </alternativeName>
</protein>
<feature type="chain" id="PRO_1000013239" description="Protein TusC">
    <location>
        <begin position="1"/>
        <end position="119"/>
    </location>
</feature>
<reference key="1">
    <citation type="submission" date="2007-08" db="EMBL/GenBank/DDBJ databases">
        <authorList>
            <consortium name="The Citrobacter koseri Genome Sequencing Project"/>
            <person name="McClelland M."/>
            <person name="Sanderson E.K."/>
            <person name="Porwollik S."/>
            <person name="Spieth J."/>
            <person name="Clifton W.S."/>
            <person name="Latreille P."/>
            <person name="Courtney L."/>
            <person name="Wang C."/>
            <person name="Pepin K."/>
            <person name="Bhonagiri V."/>
            <person name="Nash W."/>
            <person name="Johnson M."/>
            <person name="Thiruvilangam P."/>
            <person name="Wilson R."/>
        </authorList>
    </citation>
    <scope>NUCLEOTIDE SEQUENCE [LARGE SCALE GENOMIC DNA]</scope>
    <source>
        <strain>ATCC BAA-895 / CDC 4225-83 / SGSC4696</strain>
    </source>
</reference>
<dbReference type="EMBL" id="CP000822">
    <property type="protein sequence ID" value="ABV15795.1"/>
    <property type="molecule type" value="Genomic_DNA"/>
</dbReference>
<dbReference type="RefSeq" id="WP_012135437.1">
    <property type="nucleotide sequence ID" value="NC_009792.1"/>
</dbReference>
<dbReference type="SMR" id="A8AQN2"/>
<dbReference type="STRING" id="290338.CKO_04750"/>
<dbReference type="GeneID" id="45138262"/>
<dbReference type="KEGG" id="cko:CKO_04750"/>
<dbReference type="HOGENOM" id="CLU_155943_1_0_6"/>
<dbReference type="OrthoDB" id="9789418at2"/>
<dbReference type="Proteomes" id="UP000008148">
    <property type="component" value="Chromosome"/>
</dbReference>
<dbReference type="GO" id="GO:0005737">
    <property type="term" value="C:cytoplasm"/>
    <property type="evidence" value="ECO:0007669"/>
    <property type="project" value="UniProtKB-SubCell"/>
</dbReference>
<dbReference type="GO" id="GO:0008033">
    <property type="term" value="P:tRNA processing"/>
    <property type="evidence" value="ECO:0007669"/>
    <property type="project" value="UniProtKB-UniRule"/>
</dbReference>
<dbReference type="Gene3D" id="3.40.1260.10">
    <property type="entry name" value="DsrEFH-like"/>
    <property type="match status" value="1"/>
</dbReference>
<dbReference type="HAMAP" id="MF_00389">
    <property type="entry name" value="Thiourid_synth_C"/>
    <property type="match status" value="1"/>
</dbReference>
<dbReference type="InterPro" id="IPR027396">
    <property type="entry name" value="DsrEFH-like"/>
</dbReference>
<dbReference type="InterPro" id="IPR003787">
    <property type="entry name" value="Sulphur_relay_DsrE/F-like"/>
</dbReference>
<dbReference type="InterPro" id="IPR037450">
    <property type="entry name" value="Sulphur_relay_TusC"/>
</dbReference>
<dbReference type="InterPro" id="IPR017462">
    <property type="entry name" value="Sulphur_relay_TusC/DsrF"/>
</dbReference>
<dbReference type="NCBIfam" id="NF001238">
    <property type="entry name" value="PRK00211.1"/>
    <property type="match status" value="1"/>
</dbReference>
<dbReference type="NCBIfam" id="TIGR03010">
    <property type="entry name" value="sulf_tusC_dsrF"/>
    <property type="match status" value="1"/>
</dbReference>
<dbReference type="PANTHER" id="PTHR38780">
    <property type="entry name" value="PROTEIN TUSC"/>
    <property type="match status" value="1"/>
</dbReference>
<dbReference type="PANTHER" id="PTHR38780:SF1">
    <property type="entry name" value="PROTEIN TUSC"/>
    <property type="match status" value="1"/>
</dbReference>
<dbReference type="Pfam" id="PF02635">
    <property type="entry name" value="DsrE"/>
    <property type="match status" value="1"/>
</dbReference>
<dbReference type="SUPFAM" id="SSF75169">
    <property type="entry name" value="DsrEFH-like"/>
    <property type="match status" value="1"/>
</dbReference>
<comment type="function">
    <text evidence="1">Part of a sulfur-relay system required for 2-thiolation of 5-methylaminomethyl-2-thiouridine (mnm(5)s(2)U) at tRNA wobble positions.</text>
</comment>
<comment type="subunit">
    <text evidence="1">Heterohexamer, formed by a dimer of trimers. The hexameric TusBCD complex contains 2 copies each of TusB, TusC and TusD. The TusBCD complex interacts with TusE.</text>
</comment>
<comment type="subcellular location">
    <subcellularLocation>
        <location evidence="1">Cytoplasm</location>
    </subcellularLocation>
</comment>
<comment type="similarity">
    <text evidence="1">Belongs to the DsrF/TusC family.</text>
</comment>
<proteinExistence type="inferred from homology"/>